<sequence length="298" mass="33688">MMESGAGFVAMEERISPGSFFQYPLSGFRASPNRSPCPPSDRERYLTELLQERQKLGPFLQVMPNCCRLLNHEIRRVSSFPDLDRYEHGSPFRSLGQPTNGKLDLEGWSMMQAEENCHLQRASPFRGPSPVGWIGMPGLPNPPIVKKVIRLDVPVDKYPSYNFVGRILGPRGNSLKRVELATHCRVFIRGRGSVKDTVKEEKLKGKPGYEHLCEPLHVLIEAELPEDIINSRLEHAVHFLESLLKPMDESMDHYKREQLKELAALNGTLREESPSPSLSPCLSPSMSPFNSKRAKTEI</sequence>
<protein>
    <recommendedName>
        <fullName>KH domain-containing protein At1g09660/At1g09670</fullName>
    </recommendedName>
    <alternativeName>
        <fullName>Quaking-like protein 5</fullName>
    </alternativeName>
</protein>
<organism>
    <name type="scientific">Arabidopsis thaliana</name>
    <name type="common">Mouse-ear cress</name>
    <dbReference type="NCBI Taxonomy" id="3702"/>
    <lineage>
        <taxon>Eukaryota</taxon>
        <taxon>Viridiplantae</taxon>
        <taxon>Streptophyta</taxon>
        <taxon>Embryophyta</taxon>
        <taxon>Tracheophyta</taxon>
        <taxon>Spermatophyta</taxon>
        <taxon>Magnoliopsida</taxon>
        <taxon>eudicotyledons</taxon>
        <taxon>Gunneridae</taxon>
        <taxon>Pentapetalae</taxon>
        <taxon>rosids</taxon>
        <taxon>malvids</taxon>
        <taxon>Brassicales</taxon>
        <taxon>Brassicaceae</taxon>
        <taxon>Camelineae</taxon>
        <taxon>Arabidopsis</taxon>
    </lineage>
</organism>
<keyword id="KW-0025">Alternative splicing</keyword>
<keyword id="KW-0539">Nucleus</keyword>
<keyword id="KW-0597">Phosphoprotein</keyword>
<keyword id="KW-1185">Reference proteome</keyword>
<keyword id="KW-0694">RNA-binding</keyword>
<gene>
    <name evidence="5" type="ordered locus">At1g09660/At1g09670</name>
    <name evidence="6 7" type="ORF">F21M12.6/F21M12.5</name>
</gene>
<feature type="chain" id="PRO_0000357032" description="KH domain-containing protein At1g09660/At1g09670">
    <location>
        <begin position="1"/>
        <end position="298"/>
    </location>
</feature>
<feature type="domain" description="KH">
    <location>
        <begin position="152"/>
        <end position="219"/>
    </location>
</feature>
<feature type="region of interest" description="Disordered" evidence="2">
    <location>
        <begin position="266"/>
        <end position="298"/>
    </location>
</feature>
<feature type="compositionally biased region" description="Low complexity" evidence="2">
    <location>
        <begin position="274"/>
        <end position="288"/>
    </location>
</feature>
<feature type="modified residue" description="Phosphoserine" evidence="1">
    <location>
        <position position="273"/>
    </location>
</feature>
<feature type="modified residue" description="Phosphoserine" evidence="1">
    <location>
        <position position="287"/>
    </location>
</feature>
<feature type="splice variant" id="VSP_036042" description="In isoform 2." evidence="3">
    <original>DESMDHYKREQLKELAALNGTLREESPSPSLSPCLSPSMSPFNSKRAKTEI</original>
    <variation>VHSYHKSPNMSILFTWF</variation>
    <location>
        <begin position="248"/>
        <end position="298"/>
    </location>
</feature>
<feature type="sequence conflict" description="In Ref. 5; BX842524." evidence="4" ref="5">
    <original>P</original>
    <variation>A</variation>
    <location>
        <position position="32"/>
    </location>
</feature>
<feature type="sequence conflict" description="In Ref. 5; BX842524." evidence="4" ref="5">
    <original>P</original>
    <variation>A</variation>
    <location>
        <position position="38"/>
    </location>
</feature>
<feature type="sequence conflict" description="In Ref. 4; AAL31922/AAL84995." evidence="4" ref="4">
    <original>E</original>
    <variation>K</variation>
    <location>
        <position position="43"/>
    </location>
</feature>
<reference key="1">
    <citation type="journal article" date="2000" name="Nature">
        <title>Sequence and analysis of chromosome 1 of the plant Arabidopsis thaliana.</title>
        <authorList>
            <person name="Theologis A."/>
            <person name="Ecker J.R."/>
            <person name="Palm C.J."/>
            <person name="Federspiel N.A."/>
            <person name="Kaul S."/>
            <person name="White O."/>
            <person name="Alonso J."/>
            <person name="Altafi H."/>
            <person name="Araujo R."/>
            <person name="Bowman C.L."/>
            <person name="Brooks S.Y."/>
            <person name="Buehler E."/>
            <person name="Chan A."/>
            <person name="Chao Q."/>
            <person name="Chen H."/>
            <person name="Cheuk R.F."/>
            <person name="Chin C.W."/>
            <person name="Chung M.K."/>
            <person name="Conn L."/>
            <person name="Conway A.B."/>
            <person name="Conway A.R."/>
            <person name="Creasy T.H."/>
            <person name="Dewar K."/>
            <person name="Dunn P."/>
            <person name="Etgu P."/>
            <person name="Feldblyum T.V."/>
            <person name="Feng J.-D."/>
            <person name="Fong B."/>
            <person name="Fujii C.Y."/>
            <person name="Gill J.E."/>
            <person name="Goldsmith A.D."/>
            <person name="Haas B."/>
            <person name="Hansen N.F."/>
            <person name="Hughes B."/>
            <person name="Huizar L."/>
            <person name="Hunter J.L."/>
            <person name="Jenkins J."/>
            <person name="Johnson-Hopson C."/>
            <person name="Khan S."/>
            <person name="Khaykin E."/>
            <person name="Kim C.J."/>
            <person name="Koo H.L."/>
            <person name="Kremenetskaia I."/>
            <person name="Kurtz D.B."/>
            <person name="Kwan A."/>
            <person name="Lam B."/>
            <person name="Langin-Hooper S."/>
            <person name="Lee A."/>
            <person name="Lee J.M."/>
            <person name="Lenz C.A."/>
            <person name="Li J.H."/>
            <person name="Li Y.-P."/>
            <person name="Lin X."/>
            <person name="Liu S.X."/>
            <person name="Liu Z.A."/>
            <person name="Luros J.S."/>
            <person name="Maiti R."/>
            <person name="Marziali A."/>
            <person name="Militscher J."/>
            <person name="Miranda M."/>
            <person name="Nguyen M."/>
            <person name="Nierman W.C."/>
            <person name="Osborne B.I."/>
            <person name="Pai G."/>
            <person name="Peterson J."/>
            <person name="Pham P.K."/>
            <person name="Rizzo M."/>
            <person name="Rooney T."/>
            <person name="Rowley D."/>
            <person name="Sakano H."/>
            <person name="Salzberg S.L."/>
            <person name="Schwartz J.R."/>
            <person name="Shinn P."/>
            <person name="Southwick A.M."/>
            <person name="Sun H."/>
            <person name="Tallon L.J."/>
            <person name="Tambunga G."/>
            <person name="Toriumi M.J."/>
            <person name="Town C.D."/>
            <person name="Utterback T."/>
            <person name="Van Aken S."/>
            <person name="Vaysberg M."/>
            <person name="Vysotskaia V.S."/>
            <person name="Walker M."/>
            <person name="Wu D."/>
            <person name="Yu G."/>
            <person name="Fraser C.M."/>
            <person name="Venter J.C."/>
            <person name="Davis R.W."/>
        </authorList>
    </citation>
    <scope>NUCLEOTIDE SEQUENCE [LARGE SCALE GENOMIC DNA]</scope>
    <source>
        <strain>cv. Columbia</strain>
    </source>
</reference>
<reference key="2">
    <citation type="journal article" date="2017" name="Plant J.">
        <title>Araport11: a complete reannotation of the Arabidopsis thaliana reference genome.</title>
        <authorList>
            <person name="Cheng C.Y."/>
            <person name="Krishnakumar V."/>
            <person name="Chan A.P."/>
            <person name="Thibaud-Nissen F."/>
            <person name="Schobel S."/>
            <person name="Town C.D."/>
        </authorList>
    </citation>
    <scope>GENOME REANNOTATION</scope>
    <source>
        <strain>cv. Columbia</strain>
    </source>
</reference>
<reference key="3">
    <citation type="journal article" date="2002" name="Science">
        <title>Functional annotation of a full-length Arabidopsis cDNA collection.</title>
        <authorList>
            <person name="Seki M."/>
            <person name="Narusaka M."/>
            <person name="Kamiya A."/>
            <person name="Ishida J."/>
            <person name="Satou M."/>
            <person name="Sakurai T."/>
            <person name="Nakajima M."/>
            <person name="Enju A."/>
            <person name="Akiyama K."/>
            <person name="Oono Y."/>
            <person name="Muramatsu M."/>
            <person name="Hayashizaki Y."/>
            <person name="Kawai J."/>
            <person name="Carninci P."/>
            <person name="Itoh M."/>
            <person name="Ishii Y."/>
            <person name="Arakawa T."/>
            <person name="Shibata K."/>
            <person name="Shinagawa A."/>
            <person name="Shinozaki K."/>
        </authorList>
    </citation>
    <scope>NUCLEOTIDE SEQUENCE [LARGE SCALE MRNA] (ISOFORM 1)</scope>
    <source>
        <strain>cv. Columbia</strain>
    </source>
</reference>
<reference key="4">
    <citation type="journal article" date="2003" name="Science">
        <title>Empirical analysis of transcriptional activity in the Arabidopsis genome.</title>
        <authorList>
            <person name="Yamada K."/>
            <person name="Lim J."/>
            <person name="Dale J.M."/>
            <person name="Chen H."/>
            <person name="Shinn P."/>
            <person name="Palm C.J."/>
            <person name="Southwick A.M."/>
            <person name="Wu H.C."/>
            <person name="Kim C.J."/>
            <person name="Nguyen M."/>
            <person name="Pham P.K."/>
            <person name="Cheuk R.F."/>
            <person name="Karlin-Newmann G."/>
            <person name="Liu S.X."/>
            <person name="Lam B."/>
            <person name="Sakano H."/>
            <person name="Wu T."/>
            <person name="Yu G."/>
            <person name="Miranda M."/>
            <person name="Quach H.L."/>
            <person name="Tripp M."/>
            <person name="Chang C.H."/>
            <person name="Lee J.M."/>
            <person name="Toriumi M.J."/>
            <person name="Chan M.M."/>
            <person name="Tang C.C."/>
            <person name="Onodera C.S."/>
            <person name="Deng J.M."/>
            <person name="Akiyama K."/>
            <person name="Ansari Y."/>
            <person name="Arakawa T."/>
            <person name="Banh J."/>
            <person name="Banno F."/>
            <person name="Bowser L."/>
            <person name="Brooks S.Y."/>
            <person name="Carninci P."/>
            <person name="Chao Q."/>
            <person name="Choy N."/>
            <person name="Enju A."/>
            <person name="Goldsmith A.D."/>
            <person name="Gurjal M."/>
            <person name="Hansen N.F."/>
            <person name="Hayashizaki Y."/>
            <person name="Johnson-Hopson C."/>
            <person name="Hsuan V.W."/>
            <person name="Iida K."/>
            <person name="Karnes M."/>
            <person name="Khan S."/>
            <person name="Koesema E."/>
            <person name="Ishida J."/>
            <person name="Jiang P.X."/>
            <person name="Jones T."/>
            <person name="Kawai J."/>
            <person name="Kamiya A."/>
            <person name="Meyers C."/>
            <person name="Nakajima M."/>
            <person name="Narusaka M."/>
            <person name="Seki M."/>
            <person name="Sakurai T."/>
            <person name="Satou M."/>
            <person name="Tamse R."/>
            <person name="Vaysberg M."/>
            <person name="Wallender E.K."/>
            <person name="Wong C."/>
            <person name="Yamamura Y."/>
            <person name="Yuan S."/>
            <person name="Shinozaki K."/>
            <person name="Davis R.W."/>
            <person name="Theologis A."/>
            <person name="Ecker J.R."/>
        </authorList>
    </citation>
    <scope>NUCLEOTIDE SEQUENCE [LARGE SCALE MRNA] (ISOFORM 1)</scope>
    <source>
        <strain>cv. Columbia</strain>
    </source>
</reference>
<reference key="5">
    <citation type="journal article" date="2004" name="Genome Res.">
        <title>Whole genome sequence comparisons and 'full-length' cDNA sequences: a combined approach to evaluate and improve Arabidopsis genome annotation.</title>
        <authorList>
            <person name="Castelli V."/>
            <person name="Aury J.-M."/>
            <person name="Jaillon O."/>
            <person name="Wincker P."/>
            <person name="Clepet C."/>
            <person name="Menard M."/>
            <person name="Cruaud C."/>
            <person name="Quetier F."/>
            <person name="Scarpelli C."/>
            <person name="Schaechter V."/>
            <person name="Temple G."/>
            <person name="Caboche M."/>
            <person name="Weissenbach J."/>
            <person name="Salanoubat M."/>
        </authorList>
    </citation>
    <scope>NUCLEOTIDE SEQUENCE [LARGE SCALE MRNA] (ISOFORM 2)</scope>
    <source>
        <strain>cv. Columbia</strain>
    </source>
</reference>
<reference key="6">
    <citation type="submission" date="2004-09" db="EMBL/GenBank/DDBJ databases">
        <title>Large-scale analysis of RIKEN Arabidopsis full-length (RAFL) cDNAs.</title>
        <authorList>
            <person name="Totoki Y."/>
            <person name="Seki M."/>
            <person name="Ishida J."/>
            <person name="Nakajima M."/>
            <person name="Enju A."/>
            <person name="Kamiya A."/>
            <person name="Narusaka M."/>
            <person name="Shin-i T."/>
            <person name="Nakagawa M."/>
            <person name="Sakamoto N."/>
            <person name="Oishi K."/>
            <person name="Kohara Y."/>
            <person name="Kobayashi M."/>
            <person name="Toyoda A."/>
            <person name="Sakaki Y."/>
            <person name="Sakurai T."/>
            <person name="Iida K."/>
            <person name="Akiyama K."/>
            <person name="Satou M."/>
            <person name="Toyoda T."/>
            <person name="Konagaya A."/>
            <person name="Carninci P."/>
            <person name="Kawai J."/>
            <person name="Hayashizaki Y."/>
            <person name="Shinozaki K."/>
        </authorList>
    </citation>
    <scope>NUCLEOTIDE SEQUENCE [LARGE SCALE MRNA] (ISOFORM 1)</scope>
    <source>
        <strain>cv. Columbia</strain>
    </source>
</reference>
<reference key="7">
    <citation type="journal article" date="2002" name="Nucleic Acids Res.">
        <title>Genome analysis: RNA recognition motif (RRM) and K homology (KH) domain RNA-binding proteins from the flowering plant Arabidopsis thaliana.</title>
        <authorList>
            <person name="Lorkovic Z.J."/>
            <person name="Barta A."/>
        </authorList>
    </citation>
    <scope>GENE FAMILY</scope>
</reference>
<evidence type="ECO:0000250" key="1">
    <source>
        <dbReference type="UniProtKB" id="Q9ZVI3"/>
    </source>
</evidence>
<evidence type="ECO:0000256" key="2">
    <source>
        <dbReference type="SAM" id="MobiDB-lite"/>
    </source>
</evidence>
<evidence type="ECO:0000303" key="3">
    <source>
    </source>
</evidence>
<evidence type="ECO:0000305" key="4"/>
<evidence type="ECO:0000312" key="5">
    <source>
        <dbReference type="Araport" id="AT1G09660"/>
    </source>
</evidence>
<evidence type="ECO:0000312" key="6">
    <source>
        <dbReference type="EMBL" id="AAB60723.1"/>
    </source>
</evidence>
<evidence type="ECO:0000312" key="7">
    <source>
        <dbReference type="EMBL" id="AAB60747.1"/>
    </source>
</evidence>
<dbReference type="EMBL" id="AC000132">
    <property type="protein sequence ID" value="AAB60723.1"/>
    <property type="status" value="ALT_SEQ"/>
    <property type="molecule type" value="Genomic_DNA"/>
</dbReference>
<dbReference type="EMBL" id="AC000132">
    <property type="protein sequence ID" value="AAB60747.1"/>
    <property type="status" value="ALT_SEQ"/>
    <property type="molecule type" value="Genomic_DNA"/>
</dbReference>
<dbReference type="EMBL" id="CP002684">
    <property type="protein sequence ID" value="AEE28476.1"/>
    <property type="molecule type" value="Genomic_DNA"/>
</dbReference>
<dbReference type="EMBL" id="CP002684">
    <property type="protein sequence ID" value="AEE28477.1"/>
    <property type="molecule type" value="Genomic_DNA"/>
</dbReference>
<dbReference type="EMBL" id="CP002684">
    <property type="protein sequence ID" value="ANM58473.1"/>
    <property type="molecule type" value="Genomic_DNA"/>
</dbReference>
<dbReference type="EMBL" id="AK118683">
    <property type="protein sequence ID" value="BAC43277.1"/>
    <property type="molecule type" value="mRNA"/>
</dbReference>
<dbReference type="EMBL" id="AF419590">
    <property type="protein sequence ID" value="AAL31922.1"/>
    <property type="molecule type" value="mRNA"/>
</dbReference>
<dbReference type="EMBL" id="AY079111">
    <property type="protein sequence ID" value="AAL84995.1"/>
    <property type="molecule type" value="mRNA"/>
</dbReference>
<dbReference type="EMBL" id="BX842524">
    <property type="status" value="NOT_ANNOTATED_CDS"/>
    <property type="molecule type" value="mRNA"/>
</dbReference>
<dbReference type="EMBL" id="AK175370">
    <property type="protein sequence ID" value="BAD43133.1"/>
    <property type="molecule type" value="mRNA"/>
</dbReference>
<dbReference type="EMBL" id="AK175796">
    <property type="protein sequence ID" value="BAD43559.1"/>
    <property type="molecule type" value="mRNA"/>
</dbReference>
<dbReference type="EMBL" id="AK176267">
    <property type="protein sequence ID" value="BAD44030.1"/>
    <property type="molecule type" value="mRNA"/>
</dbReference>
<dbReference type="EMBL" id="AK176765">
    <property type="protein sequence ID" value="BAD44528.1"/>
    <property type="molecule type" value="mRNA"/>
</dbReference>
<dbReference type="EMBL" id="AK176899">
    <property type="protein sequence ID" value="BAD44662.1"/>
    <property type="molecule type" value="mRNA"/>
</dbReference>
<dbReference type="PIR" id="D86230">
    <property type="entry name" value="D86230"/>
</dbReference>
<dbReference type="PIR" id="E86230">
    <property type="entry name" value="E86230"/>
</dbReference>
<dbReference type="RefSeq" id="NP_001320903.1">
    <molecule id="Q8GWR3-1"/>
    <property type="nucleotide sequence ID" value="NM_001331845.1"/>
</dbReference>
<dbReference type="RefSeq" id="NP_172437.2">
    <molecule id="Q8GWR3-1"/>
    <property type="nucleotide sequence ID" value="NM_100838.6"/>
</dbReference>
<dbReference type="RefSeq" id="NP_973800.1">
    <molecule id="Q8GWR3-2"/>
    <property type="nucleotide sequence ID" value="NM_202071.3"/>
</dbReference>
<dbReference type="SMR" id="Q8GWR3"/>
<dbReference type="BioGRID" id="22735">
    <property type="interactions" value="15"/>
</dbReference>
<dbReference type="FunCoup" id="Q8GWR3">
    <property type="interactions" value="1807"/>
</dbReference>
<dbReference type="IntAct" id="Q8GWR3">
    <property type="interactions" value="16"/>
</dbReference>
<dbReference type="STRING" id="3702.Q8GWR3"/>
<dbReference type="PaxDb" id="3702-AT1G09660.1"/>
<dbReference type="ProteomicsDB" id="236616">
    <molecule id="Q8GWR3-1"/>
</dbReference>
<dbReference type="EnsemblPlants" id="AT1G09660.1">
    <molecule id="Q8GWR3-1"/>
    <property type="protein sequence ID" value="AT1G09660.1"/>
    <property type="gene ID" value="AT1G09660"/>
</dbReference>
<dbReference type="EnsemblPlants" id="AT1G09660.2">
    <molecule id="Q8GWR3-2"/>
    <property type="protein sequence ID" value="AT1G09660.2"/>
    <property type="gene ID" value="AT1G09660"/>
</dbReference>
<dbReference type="EnsemblPlants" id="AT1G09660.3">
    <molecule id="Q8GWR3-1"/>
    <property type="protein sequence ID" value="AT1G09660.3"/>
    <property type="gene ID" value="AT1G09660"/>
</dbReference>
<dbReference type="Gramene" id="AT1G09660.1">
    <molecule id="Q8GWR3-1"/>
    <property type="protein sequence ID" value="AT1G09660.1"/>
    <property type="gene ID" value="AT1G09660"/>
</dbReference>
<dbReference type="Gramene" id="AT1G09660.2">
    <molecule id="Q8GWR3-2"/>
    <property type="protein sequence ID" value="AT1G09660.2"/>
    <property type="gene ID" value="AT1G09660"/>
</dbReference>
<dbReference type="Gramene" id="AT1G09660.3">
    <molecule id="Q8GWR3-1"/>
    <property type="protein sequence ID" value="AT1G09660.3"/>
    <property type="gene ID" value="AT1G09660"/>
</dbReference>
<dbReference type="KEGG" id="ath:AT1G09660"/>
<dbReference type="Araport" id="AT1G09660"/>
<dbReference type="TAIR" id="AT1G09660"/>
<dbReference type="eggNOG" id="KOG1588">
    <property type="taxonomic scope" value="Eukaryota"/>
</dbReference>
<dbReference type="HOGENOM" id="CLU_065679_0_1_1"/>
<dbReference type="InParanoid" id="Q8GWR3"/>
<dbReference type="OMA" id="TECRIYI"/>
<dbReference type="OrthoDB" id="6777263at2759"/>
<dbReference type="PhylomeDB" id="Q8GWR3"/>
<dbReference type="PRO" id="PR:Q8GWR3"/>
<dbReference type="Proteomes" id="UP000006548">
    <property type="component" value="Chromosome 1"/>
</dbReference>
<dbReference type="ExpressionAtlas" id="Q8GWR3">
    <property type="expression patterns" value="baseline and differential"/>
</dbReference>
<dbReference type="GO" id="GO:0005634">
    <property type="term" value="C:nucleus"/>
    <property type="evidence" value="ECO:0007669"/>
    <property type="project" value="UniProtKB-SubCell"/>
</dbReference>
<dbReference type="GO" id="GO:0003723">
    <property type="term" value="F:RNA binding"/>
    <property type="evidence" value="ECO:0007669"/>
    <property type="project" value="UniProtKB-KW"/>
</dbReference>
<dbReference type="CDD" id="cd22467">
    <property type="entry name" value="KH-I_SPIN1_like"/>
    <property type="match status" value="1"/>
</dbReference>
<dbReference type="Gene3D" id="3.30.1370.10">
    <property type="entry name" value="K Homology domain, type 1"/>
    <property type="match status" value="1"/>
</dbReference>
<dbReference type="InterPro" id="IPR045071">
    <property type="entry name" value="BBP-like"/>
</dbReference>
<dbReference type="InterPro" id="IPR055256">
    <property type="entry name" value="KH_1_KHDC4/BBP-like"/>
</dbReference>
<dbReference type="InterPro" id="IPR004087">
    <property type="entry name" value="KH_dom"/>
</dbReference>
<dbReference type="InterPro" id="IPR036612">
    <property type="entry name" value="KH_dom_type_1_sf"/>
</dbReference>
<dbReference type="InterPro" id="IPR032377">
    <property type="entry name" value="STAR_dimer"/>
</dbReference>
<dbReference type="PANTHER" id="PTHR11208:SF109">
    <property type="entry name" value="OS01G0886300 PROTEIN"/>
    <property type="match status" value="1"/>
</dbReference>
<dbReference type="PANTHER" id="PTHR11208">
    <property type="entry name" value="RNA-BINDING PROTEIN RELATED"/>
    <property type="match status" value="1"/>
</dbReference>
<dbReference type="Pfam" id="PF22675">
    <property type="entry name" value="KH-I_KHDC4-BBP"/>
    <property type="match status" value="1"/>
</dbReference>
<dbReference type="Pfam" id="PF16544">
    <property type="entry name" value="STAR_dimer"/>
    <property type="match status" value="1"/>
</dbReference>
<dbReference type="SMART" id="SM00322">
    <property type="entry name" value="KH"/>
    <property type="match status" value="1"/>
</dbReference>
<dbReference type="SUPFAM" id="SSF54791">
    <property type="entry name" value="Eukaryotic type KH-domain (KH-domain type I)"/>
    <property type="match status" value="1"/>
</dbReference>
<accession>Q8GWR3</accession>
<accession>O04489</accession>
<accession>O04490</accession>
<accession>Q8W574</accession>
<comment type="subcellular location">
    <subcellularLocation>
        <location evidence="4">Nucleus</location>
    </subcellularLocation>
</comment>
<comment type="alternative products">
    <event type="alternative splicing"/>
    <isoform>
        <id>Q8GWR3-1</id>
        <name>1</name>
        <sequence type="displayed"/>
    </isoform>
    <isoform>
        <id>Q8GWR3-2</id>
        <name>2</name>
        <sequence type="described" ref="VSP_036042"/>
    </isoform>
</comment>
<comment type="sequence caution" evidence="4">
    <conflict type="erroneous gene model prediction">
        <sequence resource="EMBL-CDS" id="AAB60723"/>
    </conflict>
    <text>Was originally thought to correspond to two different genes At1g09660 and At1g09670.</text>
</comment>
<comment type="sequence caution" evidence="4">
    <conflict type="erroneous gene model prediction">
        <sequence resource="EMBL-CDS" id="AAB60747"/>
    </conflict>
    <text>Was originally thought to correspond to two different genes At1g09660 and At1g09670.</text>
</comment>
<proteinExistence type="evidence at transcript level"/>
<name>QKIL5_ARATH</name>